<sequence length="236" mass="26500">MKYKLLPCLLAILLTGCDRTEVTLSFTPEMASFSNEFDFDPLRGPVKDFTQTLMDEQGEVTKRVSGTLSEEGCFDSLELLDLENNTVVALVLDANYYRDAETLEKRVRLQGKCQLAELPSAGVSWETDDNGFVIKASSKQMQMEYRYDDQGYPLGKTTKSNDKTLSVSATPSTDPIKKLDYTAVTLLNNQRVGNVKQSCEYDNHANPVDCQLIIVDEGVKPAVERVYTIKNTIDYY</sequence>
<protein>
    <recommendedName>
        <fullName evidence="1">UPF0257 lipoprotein YnfC</fullName>
    </recommendedName>
</protein>
<evidence type="ECO:0000255" key="1">
    <source>
        <dbReference type="HAMAP-Rule" id="MF_01065"/>
    </source>
</evidence>
<organism>
    <name type="scientific">Escherichia coli O81 (strain ED1a)</name>
    <dbReference type="NCBI Taxonomy" id="585397"/>
    <lineage>
        <taxon>Bacteria</taxon>
        <taxon>Pseudomonadati</taxon>
        <taxon>Pseudomonadota</taxon>
        <taxon>Gammaproteobacteria</taxon>
        <taxon>Enterobacterales</taxon>
        <taxon>Enterobacteriaceae</taxon>
        <taxon>Escherichia</taxon>
    </lineage>
</organism>
<comment type="subcellular location">
    <subcellularLocation>
        <location evidence="1">Cell membrane</location>
        <topology evidence="1">Lipid-anchor</topology>
    </subcellularLocation>
</comment>
<comment type="similarity">
    <text evidence="1">Belongs to the UPF0257 family.</text>
</comment>
<dbReference type="EMBL" id="CU928162">
    <property type="protein sequence ID" value="CAR07947.2"/>
    <property type="molecule type" value="Genomic_DNA"/>
</dbReference>
<dbReference type="RefSeq" id="WP_001350228.1">
    <property type="nucleotide sequence ID" value="NC_011745.1"/>
</dbReference>
<dbReference type="SMR" id="B7MV31"/>
<dbReference type="KEGG" id="ecq:ECED1_1753"/>
<dbReference type="HOGENOM" id="CLU_1174761_0_0_6"/>
<dbReference type="Proteomes" id="UP000000748">
    <property type="component" value="Chromosome"/>
</dbReference>
<dbReference type="GO" id="GO:0005886">
    <property type="term" value="C:plasma membrane"/>
    <property type="evidence" value="ECO:0007669"/>
    <property type="project" value="UniProtKB-SubCell"/>
</dbReference>
<dbReference type="HAMAP" id="MF_01065">
    <property type="entry name" value="UPF0257"/>
    <property type="match status" value="1"/>
</dbReference>
<dbReference type="InterPro" id="IPR010646">
    <property type="entry name" value="UPF0257"/>
</dbReference>
<dbReference type="NCBIfam" id="NF002798">
    <property type="entry name" value="PRK02939.1"/>
    <property type="match status" value="1"/>
</dbReference>
<dbReference type="Pfam" id="PF06788">
    <property type="entry name" value="UPF0257"/>
    <property type="match status" value="1"/>
</dbReference>
<dbReference type="PROSITE" id="PS51257">
    <property type="entry name" value="PROKAR_LIPOPROTEIN"/>
    <property type="match status" value="1"/>
</dbReference>
<feature type="signal peptide" evidence="1">
    <location>
        <begin position="1"/>
        <end position="16"/>
    </location>
</feature>
<feature type="chain" id="PRO_1000149733" description="UPF0257 lipoprotein YnfC">
    <location>
        <begin position="17"/>
        <end position="236"/>
    </location>
</feature>
<feature type="lipid moiety-binding region" description="N-palmitoyl cysteine" evidence="1">
    <location>
        <position position="17"/>
    </location>
</feature>
<feature type="lipid moiety-binding region" description="S-diacylglycerol cysteine" evidence="1">
    <location>
        <position position="17"/>
    </location>
</feature>
<reference key="1">
    <citation type="journal article" date="2009" name="PLoS Genet.">
        <title>Organised genome dynamics in the Escherichia coli species results in highly diverse adaptive paths.</title>
        <authorList>
            <person name="Touchon M."/>
            <person name="Hoede C."/>
            <person name="Tenaillon O."/>
            <person name="Barbe V."/>
            <person name="Baeriswyl S."/>
            <person name="Bidet P."/>
            <person name="Bingen E."/>
            <person name="Bonacorsi S."/>
            <person name="Bouchier C."/>
            <person name="Bouvet O."/>
            <person name="Calteau A."/>
            <person name="Chiapello H."/>
            <person name="Clermont O."/>
            <person name="Cruveiller S."/>
            <person name="Danchin A."/>
            <person name="Diard M."/>
            <person name="Dossat C."/>
            <person name="Karoui M.E."/>
            <person name="Frapy E."/>
            <person name="Garry L."/>
            <person name="Ghigo J.M."/>
            <person name="Gilles A.M."/>
            <person name="Johnson J."/>
            <person name="Le Bouguenec C."/>
            <person name="Lescat M."/>
            <person name="Mangenot S."/>
            <person name="Martinez-Jehanne V."/>
            <person name="Matic I."/>
            <person name="Nassif X."/>
            <person name="Oztas S."/>
            <person name="Petit M.A."/>
            <person name="Pichon C."/>
            <person name="Rouy Z."/>
            <person name="Ruf C.S."/>
            <person name="Schneider D."/>
            <person name="Tourret J."/>
            <person name="Vacherie B."/>
            <person name="Vallenet D."/>
            <person name="Medigue C."/>
            <person name="Rocha E.P.C."/>
            <person name="Denamur E."/>
        </authorList>
    </citation>
    <scope>NUCLEOTIDE SEQUENCE [LARGE SCALE GENOMIC DNA]</scope>
    <source>
        <strain>ED1a</strain>
    </source>
</reference>
<name>YNFC_ECO81</name>
<proteinExistence type="inferred from homology"/>
<gene>
    <name evidence="1" type="primary">ynfC</name>
    <name type="ordered locus">ECED1_1753</name>
</gene>
<accession>B7MV31</accession>
<keyword id="KW-1003">Cell membrane</keyword>
<keyword id="KW-0449">Lipoprotein</keyword>
<keyword id="KW-0472">Membrane</keyword>
<keyword id="KW-0564">Palmitate</keyword>
<keyword id="KW-0732">Signal</keyword>